<accession>A8A6R1</accession>
<comment type="function">
    <text evidence="1">Involved in iron-sulfur (Fe-S) cluster assembly. May act as a regulator of Fe-S biogenesis.</text>
</comment>
<comment type="similarity">
    <text evidence="1">Belongs to the frataxin family.</text>
</comment>
<keyword id="KW-0408">Iron</keyword>
<keyword id="KW-0479">Metal-binding</keyword>
<evidence type="ECO:0000255" key="1">
    <source>
        <dbReference type="HAMAP-Rule" id="MF_00142"/>
    </source>
</evidence>
<reference key="1">
    <citation type="journal article" date="2008" name="J. Bacteriol.">
        <title>The pangenome structure of Escherichia coli: comparative genomic analysis of E. coli commensal and pathogenic isolates.</title>
        <authorList>
            <person name="Rasko D.A."/>
            <person name="Rosovitz M.J."/>
            <person name="Myers G.S.A."/>
            <person name="Mongodin E.F."/>
            <person name="Fricke W.F."/>
            <person name="Gajer P."/>
            <person name="Crabtree J."/>
            <person name="Sebaihia M."/>
            <person name="Thomson N.R."/>
            <person name="Chaudhuri R."/>
            <person name="Henderson I.R."/>
            <person name="Sperandio V."/>
            <person name="Ravel J."/>
        </authorList>
    </citation>
    <scope>NUCLEOTIDE SEQUENCE [LARGE SCALE GENOMIC DNA]</scope>
    <source>
        <strain>HS</strain>
    </source>
</reference>
<dbReference type="EMBL" id="CP000802">
    <property type="protein sequence ID" value="ABV08215.1"/>
    <property type="molecule type" value="Genomic_DNA"/>
</dbReference>
<dbReference type="RefSeq" id="WP_000999956.1">
    <property type="nucleotide sequence ID" value="NC_009800.1"/>
</dbReference>
<dbReference type="BMRB" id="A8A6R1"/>
<dbReference type="SMR" id="A8A6R1"/>
<dbReference type="KEGG" id="ecx:EcHS_A4028"/>
<dbReference type="HOGENOM" id="CLU_080880_3_0_6"/>
<dbReference type="GO" id="GO:0005829">
    <property type="term" value="C:cytosol"/>
    <property type="evidence" value="ECO:0007669"/>
    <property type="project" value="TreeGrafter"/>
</dbReference>
<dbReference type="GO" id="GO:0008199">
    <property type="term" value="F:ferric iron binding"/>
    <property type="evidence" value="ECO:0007669"/>
    <property type="project" value="InterPro"/>
</dbReference>
<dbReference type="GO" id="GO:0008198">
    <property type="term" value="F:ferrous iron binding"/>
    <property type="evidence" value="ECO:0007669"/>
    <property type="project" value="TreeGrafter"/>
</dbReference>
<dbReference type="GO" id="GO:0016226">
    <property type="term" value="P:iron-sulfur cluster assembly"/>
    <property type="evidence" value="ECO:0007669"/>
    <property type="project" value="UniProtKB-UniRule"/>
</dbReference>
<dbReference type="CDD" id="cd00503">
    <property type="entry name" value="Frataxin"/>
    <property type="match status" value="1"/>
</dbReference>
<dbReference type="FunFam" id="3.30.920.10:FF:000001">
    <property type="entry name" value="Iron-sulfur cluster assembly protein CyaY"/>
    <property type="match status" value="1"/>
</dbReference>
<dbReference type="Gene3D" id="3.30.920.10">
    <property type="entry name" value="Frataxin/CyaY"/>
    <property type="match status" value="1"/>
</dbReference>
<dbReference type="HAMAP" id="MF_00142">
    <property type="entry name" value="CyaY"/>
    <property type="match status" value="1"/>
</dbReference>
<dbReference type="InterPro" id="IPR047584">
    <property type="entry name" value="CyaY"/>
</dbReference>
<dbReference type="InterPro" id="IPR002908">
    <property type="entry name" value="Frataxin/CyaY"/>
</dbReference>
<dbReference type="InterPro" id="IPR036524">
    <property type="entry name" value="Frataxin/CyaY_sf"/>
</dbReference>
<dbReference type="InterPro" id="IPR020895">
    <property type="entry name" value="Frataxin_CS"/>
</dbReference>
<dbReference type="NCBIfam" id="TIGR03421">
    <property type="entry name" value="FeS_CyaY"/>
    <property type="match status" value="1"/>
</dbReference>
<dbReference type="PANTHER" id="PTHR16821">
    <property type="entry name" value="FRATAXIN"/>
    <property type="match status" value="1"/>
</dbReference>
<dbReference type="PANTHER" id="PTHR16821:SF2">
    <property type="entry name" value="FRATAXIN, MITOCHONDRIAL"/>
    <property type="match status" value="1"/>
</dbReference>
<dbReference type="Pfam" id="PF01491">
    <property type="entry name" value="Frataxin_Cyay"/>
    <property type="match status" value="1"/>
</dbReference>
<dbReference type="SMART" id="SM01219">
    <property type="entry name" value="Frataxin_Cyay"/>
    <property type="match status" value="1"/>
</dbReference>
<dbReference type="SUPFAM" id="SSF55387">
    <property type="entry name" value="Frataxin/Nqo15-like"/>
    <property type="match status" value="1"/>
</dbReference>
<dbReference type="PROSITE" id="PS01344">
    <property type="entry name" value="FRATAXIN_1"/>
    <property type="match status" value="1"/>
</dbReference>
<dbReference type="PROSITE" id="PS50810">
    <property type="entry name" value="FRATAXIN_2"/>
    <property type="match status" value="1"/>
</dbReference>
<name>CYAY_ECOHS</name>
<organism>
    <name type="scientific">Escherichia coli O9:H4 (strain HS)</name>
    <dbReference type="NCBI Taxonomy" id="331112"/>
    <lineage>
        <taxon>Bacteria</taxon>
        <taxon>Pseudomonadati</taxon>
        <taxon>Pseudomonadota</taxon>
        <taxon>Gammaproteobacteria</taxon>
        <taxon>Enterobacterales</taxon>
        <taxon>Enterobacteriaceae</taxon>
        <taxon>Escherichia</taxon>
    </lineage>
</organism>
<sequence length="106" mass="12280">MNDSEFHRLADQLWLTIEERLDYWDGDSDIDCEINGGVLTITFENGSKIIINRQEPLHQVWLATKQGGYHFDLKGDEWICDRSGETFWDLLEQAATQQAGETVSFR</sequence>
<protein>
    <recommendedName>
        <fullName evidence="1">Iron-sulfur cluster assembly protein CyaY</fullName>
    </recommendedName>
</protein>
<gene>
    <name evidence="1" type="primary">cyaY</name>
    <name type="ordered locus">EcHS_A4028</name>
</gene>
<feature type="chain" id="PRO_1000057931" description="Iron-sulfur cluster assembly protein CyaY">
    <location>
        <begin position="1"/>
        <end position="106"/>
    </location>
</feature>
<proteinExistence type="inferred from homology"/>